<gene>
    <name type="primary">cpcB</name>
</gene>
<accession>Q1XDB0</accession>
<organism>
    <name type="scientific">Pyropia yezoensis</name>
    <name type="common">Susabi-nori</name>
    <name type="synonym">Porphyra yezoensis</name>
    <dbReference type="NCBI Taxonomy" id="2788"/>
    <lineage>
        <taxon>Eukaryota</taxon>
        <taxon>Rhodophyta</taxon>
        <taxon>Bangiophyceae</taxon>
        <taxon>Bangiales</taxon>
        <taxon>Bangiaceae</taxon>
        <taxon>Pyropia</taxon>
    </lineage>
</organism>
<proteinExistence type="inferred from homology"/>
<comment type="function">
    <text>Light-harvesting photosynthetic bile pigment-protein from the phycobiliprotein complex (phycobilisome, PBS). Phycocyanin is the major phycobiliprotein in the PBS rod.</text>
</comment>
<comment type="subunit">
    <text evidence="2">Heterodimer of an alpha and a beta subunit, which further assembles into trimers and the trimers into hexamers. The basic functional unit of phycobiliproteins is a ring-shaped hexamer formed from two back-to-back trimers contacting via the alpha chain subunits. The trimers are composed of alpha/beta subunit heterodimers arranged around a three-fold axis of symmetry. The phycoerythrins also contain a gamma subunit which is located in the center of the hexamer.</text>
</comment>
<comment type="subcellular location">
    <subcellularLocation>
        <location evidence="1">Plastid</location>
        <location evidence="1">Chloroplast thylakoid membrane</location>
        <topology evidence="1">Peripheral membrane protein</topology>
        <orientation evidence="1">Stromal side</orientation>
    </subcellularLocation>
    <text evidence="1">Part of the phycobilisome rod.</text>
</comment>
<comment type="PTM">
    <text evidence="2">Contains two covalently linked bilin chromophores.</text>
</comment>
<comment type="similarity">
    <text evidence="3">Belongs to the phycobiliprotein family.</text>
</comment>
<dbReference type="EMBL" id="AP006715">
    <property type="protein sequence ID" value="BAE92501.1"/>
    <property type="molecule type" value="Genomic_DNA"/>
</dbReference>
<dbReference type="RefSeq" id="YP_537058.1">
    <property type="nucleotide sequence ID" value="NC_007932.1"/>
</dbReference>
<dbReference type="SMR" id="Q1XDB0"/>
<dbReference type="GeneID" id="3978879"/>
<dbReference type="GO" id="GO:0009535">
    <property type="term" value="C:chloroplast thylakoid membrane"/>
    <property type="evidence" value="ECO:0007669"/>
    <property type="project" value="UniProtKB-SubCell"/>
</dbReference>
<dbReference type="GO" id="GO:0030089">
    <property type="term" value="C:phycobilisome"/>
    <property type="evidence" value="ECO:0007669"/>
    <property type="project" value="UniProtKB-KW"/>
</dbReference>
<dbReference type="GO" id="GO:0015979">
    <property type="term" value="P:photosynthesis"/>
    <property type="evidence" value="ECO:0007669"/>
    <property type="project" value="UniProtKB-KW"/>
</dbReference>
<dbReference type="CDD" id="cd14768">
    <property type="entry name" value="PC_PEC_beta"/>
    <property type="match status" value="1"/>
</dbReference>
<dbReference type="Gene3D" id="1.10.490.20">
    <property type="entry name" value="Phycocyanins"/>
    <property type="match status" value="1"/>
</dbReference>
<dbReference type="InterPro" id="IPR009050">
    <property type="entry name" value="Globin-like_sf"/>
</dbReference>
<dbReference type="InterPro" id="IPR012128">
    <property type="entry name" value="Phycobilisome_asu/bsu"/>
</dbReference>
<dbReference type="InterPro" id="IPR038719">
    <property type="entry name" value="Phycobilisome_asu/bsu_sf"/>
</dbReference>
<dbReference type="InterPro" id="IPR006247">
    <property type="entry name" value="Phycocyanin_b"/>
</dbReference>
<dbReference type="NCBIfam" id="TIGR01339">
    <property type="entry name" value="phycocy_beta"/>
    <property type="match status" value="1"/>
</dbReference>
<dbReference type="PANTHER" id="PTHR34011:SF7">
    <property type="entry name" value="C-PHYCOCYANIN BETA SUBUNIT"/>
    <property type="match status" value="1"/>
</dbReference>
<dbReference type="PANTHER" id="PTHR34011">
    <property type="entry name" value="PHYCOBILISOME 32.1 KDA LINKER POLYPEPTIDE, PHYCOCYANIN-ASSOCIATED, ROD 2-RELATED"/>
    <property type="match status" value="1"/>
</dbReference>
<dbReference type="Pfam" id="PF00502">
    <property type="entry name" value="Phycobilisome"/>
    <property type="match status" value="1"/>
</dbReference>
<dbReference type="PIRSF" id="PIRSF000081">
    <property type="entry name" value="Phycocyanin"/>
    <property type="match status" value="1"/>
</dbReference>
<dbReference type="SUPFAM" id="SSF46458">
    <property type="entry name" value="Globin-like"/>
    <property type="match status" value="1"/>
</dbReference>
<feature type="chain" id="PRO_0000277336" description="C-phycocyanin beta chain">
    <location>
        <begin position="1"/>
        <end position="172"/>
    </location>
</feature>
<feature type="binding site" description="covalent" evidence="2">
    <location>
        <position position="82"/>
    </location>
    <ligand>
        <name>(2R,3E)-phycocyanobilin</name>
        <dbReference type="ChEBI" id="CHEBI:85275"/>
        <label>1</label>
    </ligand>
</feature>
<feature type="binding site" description="covalent" evidence="2">
    <location>
        <position position="153"/>
    </location>
    <ligand>
        <name>(2R,3E)-phycocyanobilin</name>
        <dbReference type="ChEBI" id="CHEBI:85275"/>
        <label>2</label>
    </ligand>
</feature>
<feature type="modified residue" description="N4-methylasparagine" evidence="2">
    <location>
        <position position="72"/>
    </location>
</feature>
<reference key="1">
    <citation type="submission" date="2003-11" db="EMBL/GenBank/DDBJ databases">
        <title>Whole genome sequence of Porphyra yezoensis chloroplast.</title>
        <authorList>
            <person name="Kunimoto M."/>
            <person name="Morishima K."/>
            <person name="Yoshikawa M."/>
            <person name="Fukuda S."/>
            <person name="Kobayashi T."/>
            <person name="Kobayashi M."/>
            <person name="Okazaki T."/>
            <person name="Ohara I."/>
            <person name="Nakayama I."/>
        </authorList>
    </citation>
    <scope>NUCLEOTIDE SEQUENCE [LARGE SCALE GENOMIC DNA]</scope>
    <source>
        <strain>U-51</strain>
    </source>
</reference>
<name>PHCB_PYRYE</name>
<protein>
    <recommendedName>
        <fullName>C-phycocyanin beta chain</fullName>
    </recommendedName>
</protein>
<evidence type="ECO:0000250" key="1"/>
<evidence type="ECO:0000250" key="2">
    <source>
        <dbReference type="UniProtKB" id="P00311"/>
    </source>
</evidence>
<evidence type="ECO:0000305" key="3"/>
<geneLocation type="chloroplast"/>
<sequence length="172" mass="18201">MLDAFAKVVAQADARGEFLSNTQLDALSSMVAEGNKRLDVVNKINSNASAIVTNSARALFAEQPQLIQPGGNAYTSRRMAACLRDMEIVLRYVSYAMIAGDSSVLDDRCLNGLRETYQALGTPGSSVSVAVQKMKEASVALANDLTGITQGDCSALIAELGSYFDRAAVSVV</sequence>
<keyword id="KW-0042">Antenna complex</keyword>
<keyword id="KW-0089">Bile pigment</keyword>
<keyword id="KW-0150">Chloroplast</keyword>
<keyword id="KW-0157">Chromophore</keyword>
<keyword id="KW-0249">Electron transport</keyword>
<keyword id="KW-0472">Membrane</keyword>
<keyword id="KW-0488">Methylation</keyword>
<keyword id="KW-0602">Photosynthesis</keyword>
<keyword id="KW-0605">Phycobilisome</keyword>
<keyword id="KW-0934">Plastid</keyword>
<keyword id="KW-0793">Thylakoid</keyword>
<keyword id="KW-0813">Transport</keyword>